<keyword id="KW-0325">Glycoprotein</keyword>
<keyword id="KW-1040">Host Golgi apparatus</keyword>
<keyword id="KW-1043">Host membrane</keyword>
<keyword id="KW-0945">Host-virus interaction</keyword>
<keyword id="KW-0472">Membrane</keyword>
<keyword id="KW-1185">Reference proteome</keyword>
<keyword id="KW-0812">Transmembrane</keyword>
<keyword id="KW-1133">Transmembrane helix</keyword>
<keyword id="KW-0261">Viral envelope protein</keyword>
<keyword id="KW-0899">Viral immunoevasion</keyword>
<keyword id="KW-0468">Viral matrix protein</keyword>
<keyword id="KW-0946">Virion</keyword>
<accession>Q0ZME4</accession>
<organism>
    <name type="scientific">Human coronavirus HKU1 (isolate N5)</name>
    <name type="common">HCoV-HKU1</name>
    <dbReference type="NCBI Taxonomy" id="443241"/>
    <lineage>
        <taxon>Viruses</taxon>
        <taxon>Riboviria</taxon>
        <taxon>Orthornavirae</taxon>
        <taxon>Pisuviricota</taxon>
        <taxon>Pisoniviricetes</taxon>
        <taxon>Nidovirales</taxon>
        <taxon>Cornidovirineae</taxon>
        <taxon>Coronaviridae</taxon>
        <taxon>Orthocoronavirinae</taxon>
        <taxon>Betacoronavirus</taxon>
        <taxon>Embecovirus</taxon>
        <taxon>Human coronavirus HKU1</taxon>
    </lineage>
</organism>
<reference key="1">
    <citation type="journal article" date="2006" name="J. Virol.">
        <title>Comparative analysis of 22 coronavirus HKU1 genomes reveals a novel genotype and evidence of natural recombination in coronavirus HKU1.</title>
        <authorList>
            <person name="Woo P.C.Y."/>
            <person name="Lau S.K.P."/>
            <person name="Yip C.C.Y."/>
            <person name="Huang Y."/>
            <person name="Tsoi H.-W."/>
            <person name="Chan K.-H."/>
            <person name="Yuen K.-Y."/>
        </authorList>
    </citation>
    <scope>NUCLEOTIDE SEQUENCE [GENOMIC RNA]</scope>
</reference>
<protein>
    <recommendedName>
        <fullName evidence="1">Membrane protein</fullName>
        <shortName evidence="1">M protein</shortName>
    </recommendedName>
    <alternativeName>
        <fullName evidence="1">E1 glycoprotein</fullName>
    </alternativeName>
    <alternativeName>
        <fullName evidence="1">Matrix glycoprotein</fullName>
    </alternativeName>
    <alternativeName>
        <fullName evidence="1">Membrane glycoprotein</fullName>
    </alternativeName>
</protein>
<feature type="chain" id="PRO_0000297817" description="Membrane protein">
    <location>
        <begin position="1"/>
        <end position="223"/>
    </location>
</feature>
<feature type="topological domain" description="Virion surface" evidence="1">
    <location>
        <begin position="1"/>
        <end position="20"/>
    </location>
</feature>
<feature type="transmembrane region" description="Helical" evidence="1">
    <location>
        <begin position="21"/>
        <end position="41"/>
    </location>
</feature>
<feature type="topological domain" description="Intravirion" evidence="1">
    <location>
        <begin position="42"/>
        <end position="51"/>
    </location>
</feature>
<feature type="transmembrane region" description="Helical" evidence="1">
    <location>
        <begin position="52"/>
        <end position="72"/>
    </location>
</feature>
<feature type="topological domain" description="Virion surface" evidence="1">
    <location>
        <begin position="73"/>
        <end position="80"/>
    </location>
</feature>
<feature type="transmembrane region" description="Helical" evidence="1">
    <location>
        <begin position="81"/>
        <end position="101"/>
    </location>
</feature>
<feature type="topological domain" description="Intravirion" evidence="1">
    <location>
        <begin position="102"/>
        <end position="223"/>
    </location>
</feature>
<organismHost>
    <name type="scientific">Homo sapiens</name>
    <name type="common">Human</name>
    <dbReference type="NCBI Taxonomy" id="9606"/>
</organismHost>
<evidence type="ECO:0000255" key="1">
    <source>
        <dbReference type="HAMAP-Rule" id="MF_04202"/>
    </source>
</evidence>
<evidence type="ECO:0000255" key="2">
    <source>
        <dbReference type="PROSITE-ProRule" id="PRU01275"/>
    </source>
</evidence>
<comment type="function">
    <text evidence="1 2">Component of the viral envelope that plays a central role in virus morphogenesis and assembly via its interactions with other viral proteins.</text>
</comment>
<comment type="subunit">
    <text evidence="1 2">Homomultimer. Interacts with envelope E protein in the budding compartment of the host cell, which is located between endoplasmic reticulum and the Golgi complex. Forms a complex with HE and S proteins. Interacts with nucleocapsid N protein. This interaction probably participates in RNA packaging into the virus.</text>
</comment>
<comment type="subcellular location">
    <subcellularLocation>
        <location evidence="1">Virion membrane</location>
        <topology evidence="1">Multi-pass membrane protein</topology>
    </subcellularLocation>
    <subcellularLocation>
        <location evidence="1">Host Golgi apparatus membrane</location>
        <topology evidence="1">Multi-pass membrane protein</topology>
    </subcellularLocation>
    <text evidence="1">Largely embedded in the lipid bilayer.</text>
</comment>
<comment type="miscellaneous">
    <text>Isolate N5 belongs to genotype C. Genotype C probably arose from recombination between genotypes A and B.</text>
</comment>
<comment type="similarity">
    <text evidence="1">Belongs to the betacoronaviruses M protein family.</text>
</comment>
<gene>
    <name evidence="1" type="primary">M</name>
    <name type="ORF">6</name>
</gene>
<name>VME1_CVHN5</name>
<sequence length="223" mass="25658">MNESIFPHWNSDQAITFLKEWNFSLGVILLLITIILQFGYTSRSMFVYLIKMIILWLMWPLTIILTIFNCFYALNNVFLGLSILFTIISIVIWILYFVNSIRLFIRTGSWWSFNPETNNLMCIDMKGKMYVRPVIEDYHTLTATVIRGHLYIQGVKLGTGYTLADLPVYVTVAKVQVLCTYKRAFLDKLDVNSGFAVFVKSKVGNYRLPSSKSSGMDTALLRA</sequence>
<proteinExistence type="inferred from homology"/>
<dbReference type="EMBL" id="DQ339101">
    <property type="protein sequence ID" value="ABC70722.1"/>
    <property type="molecule type" value="Genomic_RNA"/>
</dbReference>
<dbReference type="SMR" id="Q0ZME4"/>
<dbReference type="Proteomes" id="UP000001985">
    <property type="component" value="Genome"/>
</dbReference>
<dbReference type="GO" id="GO:0044178">
    <property type="term" value="C:host cell Golgi membrane"/>
    <property type="evidence" value="ECO:0007669"/>
    <property type="project" value="UniProtKB-SubCell"/>
</dbReference>
<dbReference type="GO" id="GO:0016020">
    <property type="term" value="C:membrane"/>
    <property type="evidence" value="ECO:0007669"/>
    <property type="project" value="UniProtKB-UniRule"/>
</dbReference>
<dbReference type="GO" id="GO:0019031">
    <property type="term" value="C:viral envelope"/>
    <property type="evidence" value="ECO:0007669"/>
    <property type="project" value="UniProtKB-UniRule"/>
</dbReference>
<dbReference type="GO" id="GO:0055036">
    <property type="term" value="C:virion membrane"/>
    <property type="evidence" value="ECO:0007669"/>
    <property type="project" value="UniProtKB-SubCell"/>
</dbReference>
<dbReference type="GO" id="GO:0039660">
    <property type="term" value="F:structural constituent of virion"/>
    <property type="evidence" value="ECO:0007669"/>
    <property type="project" value="UniProtKB-UniRule"/>
</dbReference>
<dbReference type="CDD" id="cd21568">
    <property type="entry name" value="HCoV-like_M"/>
    <property type="match status" value="1"/>
</dbReference>
<dbReference type="HAMAP" id="MF_04202">
    <property type="entry name" value="BETA_CORONA_M"/>
    <property type="match status" value="1"/>
</dbReference>
<dbReference type="InterPro" id="IPR002574">
    <property type="entry name" value="M_CoV"/>
</dbReference>
<dbReference type="InterPro" id="IPR044362">
    <property type="entry name" value="M_HCoV-like"/>
</dbReference>
<dbReference type="Pfam" id="PF01635">
    <property type="entry name" value="CoV_M"/>
    <property type="match status" value="1"/>
</dbReference>
<dbReference type="PROSITE" id="PS51927">
    <property type="entry name" value="COV_M"/>
    <property type="match status" value="1"/>
</dbReference>